<protein>
    <recommendedName>
        <fullName>Esculentin-1A</fullName>
    </recommendedName>
</protein>
<comment type="function">
    <text>Shows antibacterial activity against representative Gram-negative and Gram-positive bacterial species, and hemolytic activity.</text>
</comment>
<comment type="subcellular location">
    <subcellularLocation>
        <location>Secreted</location>
    </subcellularLocation>
</comment>
<comment type="tissue specificity">
    <text>Expressed by the skin glands.</text>
</comment>
<comment type="similarity">
    <text evidence="2">Belongs to the frog skin active peptide (FSAP) family. Brevinin subfamily.</text>
</comment>
<accession>P40843</accession>
<dbReference type="PIR" id="G53578">
    <property type="entry name" value="G53578"/>
</dbReference>
<dbReference type="PDB" id="2N6M">
    <property type="method" value="NMR"/>
    <property type="chains" value="A=1-20"/>
</dbReference>
<dbReference type="PDB" id="5XDJ">
    <property type="method" value="NMR"/>
    <property type="chains" value="A=1-20"/>
</dbReference>
<dbReference type="PDBsum" id="2N6M"/>
<dbReference type="PDBsum" id="5XDJ"/>
<dbReference type="BMRB" id="P40843"/>
<dbReference type="SMR" id="P40843"/>
<dbReference type="EvolutionaryTrace" id="P40843"/>
<dbReference type="GO" id="GO:0005576">
    <property type="term" value="C:extracellular region"/>
    <property type="evidence" value="ECO:0007669"/>
    <property type="project" value="UniProtKB-SubCell"/>
</dbReference>
<dbReference type="GO" id="GO:0042742">
    <property type="term" value="P:defense response to bacterium"/>
    <property type="evidence" value="ECO:0007669"/>
    <property type="project" value="UniProtKB-KW"/>
</dbReference>
<dbReference type="GO" id="GO:0031640">
    <property type="term" value="P:killing of cells of another organism"/>
    <property type="evidence" value="ECO:0007669"/>
    <property type="project" value="UniProtKB-KW"/>
</dbReference>
<dbReference type="InterPro" id="IPR012521">
    <property type="entry name" value="Antimicrobial_frog_2"/>
</dbReference>
<dbReference type="Pfam" id="PF08023">
    <property type="entry name" value="Antimicrobial_2"/>
    <property type="match status" value="1"/>
</dbReference>
<sequence>GIFSKLAGKKIKNLLISGLKNVGKEVGMDVVRTGIDIAGCKIKGEC</sequence>
<evidence type="ECO:0000269" key="1">
    <source>
    </source>
</evidence>
<evidence type="ECO:0000305" key="2"/>
<evidence type="ECO:0007829" key="3">
    <source>
        <dbReference type="PDB" id="2N6M"/>
    </source>
</evidence>
<name>ES1A_PELLE</name>
<feature type="chain" id="PRO_0000165367" description="Esculentin-1A">
    <location>
        <begin position="1"/>
        <end position="46"/>
    </location>
</feature>
<feature type="disulfide bond" evidence="1">
    <location>
        <begin position="40"/>
        <end position="46"/>
    </location>
</feature>
<feature type="helix" evidence="3">
    <location>
        <begin position="5"/>
        <end position="19"/>
    </location>
</feature>
<keyword id="KW-0002">3D-structure</keyword>
<keyword id="KW-0878">Amphibian defense peptide</keyword>
<keyword id="KW-0044">Antibiotic</keyword>
<keyword id="KW-0929">Antimicrobial</keyword>
<keyword id="KW-0204">Cytolysis</keyword>
<keyword id="KW-0903">Direct protein sequencing</keyword>
<keyword id="KW-1015">Disulfide bond</keyword>
<keyword id="KW-0354">Hemolysis</keyword>
<keyword id="KW-0964">Secreted</keyword>
<reference key="1">
    <citation type="journal article" date="1994" name="J. Biol. Chem.">
        <title>Antimicrobial peptides from skin secretions of Rana esculenta. Molecular cloning of cDNAs encoding esculentin and brevinins and isolation of new active peptides.</title>
        <authorList>
            <person name="Simmaco M."/>
            <person name="Mignogna G."/>
            <person name="Barra D."/>
            <person name="Bossa F."/>
        </authorList>
    </citation>
    <scope>PROTEIN SEQUENCE</scope>
    <scope>DISULFIDE BOND</scope>
    <source>
        <tissue>Skin secretion</tissue>
    </source>
</reference>
<proteinExistence type="evidence at protein level"/>
<organism>
    <name type="scientific">Pelophylax lessonae</name>
    <name type="common">Pool frog</name>
    <name type="synonym">Rana lessonae</name>
    <dbReference type="NCBI Taxonomy" id="45623"/>
    <lineage>
        <taxon>Eukaryota</taxon>
        <taxon>Metazoa</taxon>
        <taxon>Chordata</taxon>
        <taxon>Craniata</taxon>
        <taxon>Vertebrata</taxon>
        <taxon>Euteleostomi</taxon>
        <taxon>Amphibia</taxon>
        <taxon>Batrachia</taxon>
        <taxon>Anura</taxon>
        <taxon>Neobatrachia</taxon>
        <taxon>Ranoidea</taxon>
        <taxon>Ranidae</taxon>
        <taxon>Pelophylax</taxon>
    </lineage>
</organism>